<feature type="chain" id="PRO_0000430209" description="Olfactory receptor 51E2">
    <location>
        <begin position="1"/>
        <end position="320"/>
    </location>
</feature>
<feature type="topological domain" description="Extracellular" evidence="2">
    <location>
        <begin position="1"/>
        <end position="27"/>
    </location>
</feature>
<feature type="transmembrane region" description="Helical; Name=1" evidence="2">
    <location>
        <begin position="28"/>
        <end position="48"/>
    </location>
</feature>
<feature type="topological domain" description="Cytoplasmic" evidence="2">
    <location>
        <begin position="49"/>
        <end position="53"/>
    </location>
</feature>
<feature type="transmembrane region" description="Helical; Name=2" evidence="2">
    <location>
        <begin position="54"/>
        <end position="74"/>
    </location>
</feature>
<feature type="topological domain" description="Extracellular" evidence="2">
    <location>
        <begin position="75"/>
        <end position="98"/>
    </location>
</feature>
<feature type="transmembrane region" description="Helical; Name=3" evidence="2">
    <location>
        <begin position="99"/>
        <end position="119"/>
    </location>
</feature>
<feature type="topological domain" description="Cytoplasmic" evidence="2">
    <location>
        <begin position="120"/>
        <end position="141"/>
    </location>
</feature>
<feature type="transmembrane region" description="Helical; Name=4" evidence="2">
    <location>
        <begin position="142"/>
        <end position="162"/>
    </location>
</feature>
<feature type="topological domain" description="Extracellular" evidence="2">
    <location>
        <begin position="163"/>
        <end position="200"/>
    </location>
</feature>
<feature type="transmembrane region" description="Helical; Name=5" evidence="2">
    <location>
        <begin position="201"/>
        <end position="221"/>
    </location>
</feature>
<feature type="topological domain" description="Cytoplasmic" evidence="2">
    <location>
        <begin position="222"/>
        <end position="239"/>
    </location>
</feature>
<feature type="transmembrane region" description="Helical; Name=6" evidence="2">
    <location>
        <begin position="240"/>
        <end position="260"/>
    </location>
</feature>
<feature type="topological domain" description="Extracellular" evidence="2">
    <location>
        <begin position="261"/>
        <end position="269"/>
    </location>
</feature>
<feature type="transmembrane region" description="Helical; Name=7" evidence="2">
    <location>
        <begin position="270"/>
        <end position="290"/>
    </location>
</feature>
<feature type="topological domain" description="Cytoplasmic" evidence="2">
    <location>
        <begin position="291"/>
        <end position="320"/>
    </location>
</feature>
<feature type="glycosylation site" description="N-linked (GlcNAc...) asparagine" evidence="2">
    <location>
        <position position="5"/>
    </location>
</feature>
<feature type="disulfide bond" evidence="3">
    <location>
        <begin position="96"/>
        <end position="178"/>
    </location>
</feature>
<organism>
    <name type="scientific">Mus musculus</name>
    <name type="common">Mouse</name>
    <dbReference type="NCBI Taxonomy" id="10090"/>
    <lineage>
        <taxon>Eukaryota</taxon>
        <taxon>Metazoa</taxon>
        <taxon>Chordata</taxon>
        <taxon>Craniata</taxon>
        <taxon>Vertebrata</taxon>
        <taxon>Euteleostomi</taxon>
        <taxon>Mammalia</taxon>
        <taxon>Eutheria</taxon>
        <taxon>Euarchontoglires</taxon>
        <taxon>Glires</taxon>
        <taxon>Rodentia</taxon>
        <taxon>Myomorpha</taxon>
        <taxon>Muroidea</taxon>
        <taxon>Muridae</taxon>
        <taxon>Murinae</taxon>
        <taxon>Mus</taxon>
        <taxon>Mus</taxon>
    </lineage>
</organism>
<evidence type="ECO:0000250" key="1">
    <source>
        <dbReference type="UniProtKB" id="Q9H255"/>
    </source>
</evidence>
<evidence type="ECO:0000255" key="2"/>
<evidence type="ECO:0000255" key="3">
    <source>
        <dbReference type="PROSITE-ProRule" id="PRU00521"/>
    </source>
</evidence>
<evidence type="ECO:0000269" key="4">
    <source>
    </source>
</evidence>
<evidence type="ECO:0000269" key="5">
    <source>
    </source>
</evidence>
<evidence type="ECO:0000269" key="6">
    <source>
    </source>
</evidence>
<evidence type="ECO:0000269" key="7">
    <source>
    </source>
</evidence>
<evidence type="ECO:0000269" key="8">
    <source>
    </source>
</evidence>
<evidence type="ECO:0000269" key="9">
    <source>
    </source>
</evidence>
<evidence type="ECO:0000303" key="10">
    <source>
    </source>
</evidence>
<evidence type="ECO:0000303" key="11">
    <source>
    </source>
</evidence>
<protein>
    <recommendedName>
        <fullName>Olfactory receptor 51E2</fullName>
    </recommendedName>
    <alternativeName>
        <fullName evidence="11">Olfactory receptor 78</fullName>
    </alternativeName>
</protein>
<gene>
    <name type="primary">Or51e2</name>
    <name evidence="10" type="synonym">Mol2.3</name>
    <name evidence="11" type="synonym">Olfr78</name>
    <name type="synonym">Psgr</name>
</gene>
<dbReference type="EMBL" id="AF378854">
    <property type="protein sequence ID" value="AAL35109.1"/>
    <property type="molecule type" value="mRNA"/>
</dbReference>
<dbReference type="EMBL" id="AY073011">
    <property type="protein sequence ID" value="AAL60674.1"/>
    <property type="molecule type" value="Genomic_DNA"/>
</dbReference>
<dbReference type="EMBL" id="AY317674">
    <property type="protein sequence ID" value="AAP71053.1"/>
    <property type="molecule type" value="Genomic_DNA"/>
</dbReference>
<dbReference type="EMBL" id="AK028467">
    <property type="protein sequence ID" value="BAC25966.1"/>
    <property type="molecule type" value="mRNA"/>
</dbReference>
<dbReference type="EMBL" id="AK036356">
    <property type="protein sequence ID" value="BAC29396.1"/>
    <property type="molecule type" value="mRNA"/>
</dbReference>
<dbReference type="EMBL" id="AC162175">
    <property type="status" value="NOT_ANNOTATED_CDS"/>
    <property type="molecule type" value="Genomic_DNA"/>
</dbReference>
<dbReference type="EMBL" id="CH466531">
    <property type="protein sequence ID" value="EDL16625.1"/>
    <property type="molecule type" value="Genomic_DNA"/>
</dbReference>
<dbReference type="EMBL" id="CH466531">
    <property type="protein sequence ID" value="EDL16627.1"/>
    <property type="molecule type" value="Genomic_DNA"/>
</dbReference>
<dbReference type="EMBL" id="BC120603">
    <property type="protein sequence ID" value="AAI20604.1"/>
    <property type="molecule type" value="mRNA"/>
</dbReference>
<dbReference type="EMBL" id="BC120629">
    <property type="protein sequence ID" value="AAI20630.1"/>
    <property type="molecule type" value="mRNA"/>
</dbReference>
<dbReference type="CCDS" id="CCDS21546.1"/>
<dbReference type="RefSeq" id="NP_001161975.1">
    <property type="nucleotide sequence ID" value="NM_001168503.1"/>
</dbReference>
<dbReference type="RefSeq" id="NP_570936.1">
    <property type="nucleotide sequence ID" value="NM_130866.4"/>
</dbReference>
<dbReference type="SMR" id="Q8VBV9"/>
<dbReference type="FunCoup" id="Q8VBV9">
    <property type="interactions" value="1241"/>
</dbReference>
<dbReference type="STRING" id="10090.ENSMUSP00000149274"/>
<dbReference type="GlyCosmos" id="Q8VBV9">
    <property type="glycosylation" value="1 site, No reported glycans"/>
</dbReference>
<dbReference type="GlyGen" id="Q8VBV9">
    <property type="glycosylation" value="1 site"/>
</dbReference>
<dbReference type="PaxDb" id="10090-ENSMUSP00000058085"/>
<dbReference type="ProteomicsDB" id="293822"/>
<dbReference type="Antibodypedia" id="23521">
    <property type="antibodies" value="122 antibodies from 25 providers"/>
</dbReference>
<dbReference type="Ensembl" id="ENSMUST00000060187.15">
    <property type="protein sequence ID" value="ENSMUSP00000058085.8"/>
    <property type="gene ID" value="ENSMUSG00000043366.17"/>
</dbReference>
<dbReference type="Ensembl" id="ENSMUST00000168007.3">
    <property type="protein sequence ID" value="ENSMUSP00000133255.2"/>
    <property type="gene ID" value="ENSMUSG00000043366.17"/>
</dbReference>
<dbReference type="Ensembl" id="ENSMUST00000217123.3">
    <property type="protein sequence ID" value="ENSMUSP00000149274.2"/>
    <property type="gene ID" value="ENSMUSG00000043366.17"/>
</dbReference>
<dbReference type="GeneID" id="170639"/>
<dbReference type="KEGG" id="mmu:170639"/>
<dbReference type="UCSC" id="uc009isl.2">
    <property type="organism name" value="mouse"/>
</dbReference>
<dbReference type="AGR" id="MGI:2157548"/>
<dbReference type="CTD" id="81285"/>
<dbReference type="MGI" id="MGI:2157548">
    <property type="gene designation" value="Or51e2"/>
</dbReference>
<dbReference type="VEuPathDB" id="HostDB:ENSMUSG00000043366"/>
<dbReference type="eggNOG" id="ENOG502QVRN">
    <property type="taxonomic scope" value="Eukaryota"/>
</dbReference>
<dbReference type="GeneTree" id="ENSGT01130000278286"/>
<dbReference type="HOGENOM" id="CLU_012526_0_0_1"/>
<dbReference type="InParanoid" id="Q8VBV9"/>
<dbReference type="OMA" id="DMMKLAY"/>
<dbReference type="OrthoDB" id="5969463at2759"/>
<dbReference type="PhylomeDB" id="Q8VBV9"/>
<dbReference type="TreeFam" id="TF342735"/>
<dbReference type="Reactome" id="R-MMU-381753">
    <property type="pathway name" value="Olfactory Signaling Pathway"/>
</dbReference>
<dbReference type="BioGRID-ORCS" id="170639">
    <property type="hits" value="3 hits in 72 CRISPR screens"/>
</dbReference>
<dbReference type="ChiTaRS" id="Olfr78">
    <property type="organism name" value="mouse"/>
</dbReference>
<dbReference type="PRO" id="PR:Q8VBV9"/>
<dbReference type="Proteomes" id="UP000000589">
    <property type="component" value="Chromosome 7"/>
</dbReference>
<dbReference type="RNAct" id="Q8VBV9">
    <property type="molecule type" value="protein"/>
</dbReference>
<dbReference type="Bgee" id="ENSMUSG00000043366">
    <property type="expression patterns" value="Expressed in umbilical cord and 56 other cell types or tissues"/>
</dbReference>
<dbReference type="GO" id="GO:0031901">
    <property type="term" value="C:early endosome membrane"/>
    <property type="evidence" value="ECO:0000250"/>
    <property type="project" value="UniProtKB"/>
</dbReference>
<dbReference type="GO" id="GO:0016020">
    <property type="term" value="C:membrane"/>
    <property type="evidence" value="ECO:0000247"/>
    <property type="project" value="MGI"/>
</dbReference>
<dbReference type="GO" id="GO:0005886">
    <property type="term" value="C:plasma membrane"/>
    <property type="evidence" value="ECO:0000314"/>
    <property type="project" value="UniProtKB"/>
</dbReference>
<dbReference type="GO" id="GO:0004930">
    <property type="term" value="F:G protein-coupled receptor activity"/>
    <property type="evidence" value="ECO:0007669"/>
    <property type="project" value="UniProtKB-KW"/>
</dbReference>
<dbReference type="GO" id="GO:0003707">
    <property type="term" value="F:nuclear steroid receptor activity"/>
    <property type="evidence" value="ECO:0000250"/>
    <property type="project" value="UniProtKB"/>
</dbReference>
<dbReference type="GO" id="GO:0004984">
    <property type="term" value="F:olfactory receptor activity"/>
    <property type="evidence" value="ECO:0000250"/>
    <property type="project" value="UniProtKB"/>
</dbReference>
<dbReference type="GO" id="GO:0038023">
    <property type="term" value="F:signaling receptor activity"/>
    <property type="evidence" value="ECO:0000314"/>
    <property type="project" value="UniProtKB"/>
</dbReference>
<dbReference type="GO" id="GO:0007189">
    <property type="term" value="P:adenylate cyclase-activating G protein-coupled receptor signaling pathway"/>
    <property type="evidence" value="ECO:0000250"/>
    <property type="project" value="UniProtKB"/>
</dbReference>
<dbReference type="GO" id="GO:0016477">
    <property type="term" value="P:cell migration"/>
    <property type="evidence" value="ECO:0000250"/>
    <property type="project" value="UniProtKB"/>
</dbReference>
<dbReference type="GO" id="GO:0071398">
    <property type="term" value="P:cellular response to fatty acid"/>
    <property type="evidence" value="ECO:0000314"/>
    <property type="project" value="UniProtKB"/>
</dbReference>
<dbReference type="GO" id="GO:0007186">
    <property type="term" value="P:G protein-coupled receptor signaling pathway"/>
    <property type="evidence" value="ECO:0000247"/>
    <property type="project" value="MGI"/>
</dbReference>
<dbReference type="GO" id="GO:0030318">
    <property type="term" value="P:melanocyte differentiation"/>
    <property type="evidence" value="ECO:0000250"/>
    <property type="project" value="UniProtKB"/>
</dbReference>
<dbReference type="GO" id="GO:0097325">
    <property type="term" value="P:melanocyte proliferation"/>
    <property type="evidence" value="ECO:0000250"/>
    <property type="project" value="UniProtKB"/>
</dbReference>
<dbReference type="GO" id="GO:0045777">
    <property type="term" value="P:positive regulation of blood pressure"/>
    <property type="evidence" value="ECO:0000315"/>
    <property type="project" value="UniProtKB"/>
</dbReference>
<dbReference type="GO" id="GO:1900135">
    <property type="term" value="P:positive regulation of renin secretion into blood stream"/>
    <property type="evidence" value="ECO:0000315"/>
    <property type="project" value="UniProtKB"/>
</dbReference>
<dbReference type="GO" id="GO:0007608">
    <property type="term" value="P:sensory perception of smell"/>
    <property type="evidence" value="ECO:0000247"/>
    <property type="project" value="MGI"/>
</dbReference>
<dbReference type="GO" id="GO:0043401">
    <property type="term" value="P:steroid hormone receptor signaling pathway"/>
    <property type="evidence" value="ECO:0000250"/>
    <property type="project" value="UniProtKB"/>
</dbReference>
<dbReference type="CDD" id="cd15222">
    <property type="entry name" value="7tmA_OR51-like"/>
    <property type="match status" value="1"/>
</dbReference>
<dbReference type="FunFam" id="1.20.1070.10:FF:000002">
    <property type="entry name" value="Olfactory receptor"/>
    <property type="match status" value="1"/>
</dbReference>
<dbReference type="Gene3D" id="1.20.1070.10">
    <property type="entry name" value="Rhodopsin 7-helix transmembrane proteins"/>
    <property type="match status" value="1"/>
</dbReference>
<dbReference type="InterPro" id="IPR000276">
    <property type="entry name" value="GPCR_Rhodpsn"/>
</dbReference>
<dbReference type="InterPro" id="IPR017452">
    <property type="entry name" value="GPCR_Rhodpsn_7TM"/>
</dbReference>
<dbReference type="InterPro" id="IPR000725">
    <property type="entry name" value="Olfact_rcpt"/>
</dbReference>
<dbReference type="InterPro" id="IPR050402">
    <property type="entry name" value="OR51/52/56-like"/>
</dbReference>
<dbReference type="PANTHER" id="PTHR26450:SF92">
    <property type="entry name" value="OLFACTORY RECEPTOR 51E2"/>
    <property type="match status" value="1"/>
</dbReference>
<dbReference type="PANTHER" id="PTHR26450">
    <property type="entry name" value="OLFACTORY RECEPTOR 56B1-RELATED"/>
    <property type="match status" value="1"/>
</dbReference>
<dbReference type="Pfam" id="PF13853">
    <property type="entry name" value="7tm_4"/>
    <property type="match status" value="1"/>
</dbReference>
<dbReference type="PRINTS" id="PR00237">
    <property type="entry name" value="GPCRRHODOPSN"/>
</dbReference>
<dbReference type="PRINTS" id="PR00245">
    <property type="entry name" value="OLFACTORYR"/>
</dbReference>
<dbReference type="SUPFAM" id="SSF81321">
    <property type="entry name" value="Family A G protein-coupled receptor-like"/>
    <property type="match status" value="1"/>
</dbReference>
<dbReference type="PROSITE" id="PS00237">
    <property type="entry name" value="G_PROTEIN_RECEP_F1_1"/>
    <property type="match status" value="1"/>
</dbReference>
<dbReference type="PROSITE" id="PS50262">
    <property type="entry name" value="G_PROTEIN_RECEP_F1_2"/>
    <property type="match status" value="1"/>
</dbReference>
<accession>Q8VBV9</accession>
<reference key="1">
    <citation type="journal article" date="2001" name="Gene">
        <title>Cloning and genetic characterization of an evolutionarily conserved human olfactory receptor that is differentially expressed across species.</title>
        <authorList>
            <person name="Yuan T.T."/>
            <person name="Toy P."/>
            <person name="McClary J.A."/>
            <person name="Lin R.J."/>
            <person name="Miyamoto N.G."/>
            <person name="Kretschmer P.J."/>
        </authorList>
    </citation>
    <scope>NUCLEOTIDE SEQUENCE [MRNA]</scope>
    <scope>TISSUE SPECIFICITY</scope>
    <source>
        <strain>BALB/cJ</strain>
    </source>
</reference>
<reference key="2">
    <citation type="journal article" date="2002" name="Nat. Neurosci.">
        <title>The olfactory receptor gene superfamily of the mouse.</title>
        <authorList>
            <person name="Zhang X."/>
            <person name="Firestein S."/>
        </authorList>
    </citation>
    <scope>NUCLEOTIDE SEQUENCE [GENOMIC DNA]</scope>
</reference>
<reference key="3">
    <citation type="journal article" date="2003" name="Genome Biol.">
        <title>Odorant receptor expressed sequence tags demonstrate olfactory expression of over 400 genes, extensive alternate splicing and unequal expression levels.</title>
        <authorList>
            <person name="Young J.M."/>
            <person name="Shykind B.M."/>
            <person name="Lane R.P."/>
            <person name="Tonnes-Priddy L."/>
            <person name="Ross J.A."/>
            <person name="Walker M."/>
            <person name="Williams E.M."/>
            <person name="Trask B.J."/>
        </authorList>
    </citation>
    <scope>NUCLEOTIDE SEQUENCE [GENOMIC DNA]</scope>
</reference>
<reference key="4">
    <citation type="journal article" date="2005" name="Science">
        <title>The transcriptional landscape of the mammalian genome.</title>
        <authorList>
            <person name="Carninci P."/>
            <person name="Kasukawa T."/>
            <person name="Katayama S."/>
            <person name="Gough J."/>
            <person name="Frith M.C."/>
            <person name="Maeda N."/>
            <person name="Oyama R."/>
            <person name="Ravasi T."/>
            <person name="Lenhard B."/>
            <person name="Wells C."/>
            <person name="Kodzius R."/>
            <person name="Shimokawa K."/>
            <person name="Bajic V.B."/>
            <person name="Brenner S.E."/>
            <person name="Batalov S."/>
            <person name="Forrest A.R."/>
            <person name="Zavolan M."/>
            <person name="Davis M.J."/>
            <person name="Wilming L.G."/>
            <person name="Aidinis V."/>
            <person name="Allen J.E."/>
            <person name="Ambesi-Impiombato A."/>
            <person name="Apweiler R."/>
            <person name="Aturaliya R.N."/>
            <person name="Bailey T.L."/>
            <person name="Bansal M."/>
            <person name="Baxter L."/>
            <person name="Beisel K.W."/>
            <person name="Bersano T."/>
            <person name="Bono H."/>
            <person name="Chalk A.M."/>
            <person name="Chiu K.P."/>
            <person name="Choudhary V."/>
            <person name="Christoffels A."/>
            <person name="Clutterbuck D.R."/>
            <person name="Crowe M.L."/>
            <person name="Dalla E."/>
            <person name="Dalrymple B.P."/>
            <person name="de Bono B."/>
            <person name="Della Gatta G."/>
            <person name="di Bernardo D."/>
            <person name="Down T."/>
            <person name="Engstrom P."/>
            <person name="Fagiolini M."/>
            <person name="Faulkner G."/>
            <person name="Fletcher C.F."/>
            <person name="Fukushima T."/>
            <person name="Furuno M."/>
            <person name="Futaki S."/>
            <person name="Gariboldi M."/>
            <person name="Georgii-Hemming P."/>
            <person name="Gingeras T.R."/>
            <person name="Gojobori T."/>
            <person name="Green R.E."/>
            <person name="Gustincich S."/>
            <person name="Harbers M."/>
            <person name="Hayashi Y."/>
            <person name="Hensch T.K."/>
            <person name="Hirokawa N."/>
            <person name="Hill D."/>
            <person name="Huminiecki L."/>
            <person name="Iacono M."/>
            <person name="Ikeo K."/>
            <person name="Iwama A."/>
            <person name="Ishikawa T."/>
            <person name="Jakt M."/>
            <person name="Kanapin A."/>
            <person name="Katoh M."/>
            <person name="Kawasawa Y."/>
            <person name="Kelso J."/>
            <person name="Kitamura H."/>
            <person name="Kitano H."/>
            <person name="Kollias G."/>
            <person name="Krishnan S.P."/>
            <person name="Kruger A."/>
            <person name="Kummerfeld S.K."/>
            <person name="Kurochkin I.V."/>
            <person name="Lareau L.F."/>
            <person name="Lazarevic D."/>
            <person name="Lipovich L."/>
            <person name="Liu J."/>
            <person name="Liuni S."/>
            <person name="McWilliam S."/>
            <person name="Madan Babu M."/>
            <person name="Madera M."/>
            <person name="Marchionni L."/>
            <person name="Matsuda H."/>
            <person name="Matsuzawa S."/>
            <person name="Miki H."/>
            <person name="Mignone F."/>
            <person name="Miyake S."/>
            <person name="Morris K."/>
            <person name="Mottagui-Tabar S."/>
            <person name="Mulder N."/>
            <person name="Nakano N."/>
            <person name="Nakauchi H."/>
            <person name="Ng P."/>
            <person name="Nilsson R."/>
            <person name="Nishiguchi S."/>
            <person name="Nishikawa S."/>
            <person name="Nori F."/>
            <person name="Ohara O."/>
            <person name="Okazaki Y."/>
            <person name="Orlando V."/>
            <person name="Pang K.C."/>
            <person name="Pavan W.J."/>
            <person name="Pavesi G."/>
            <person name="Pesole G."/>
            <person name="Petrovsky N."/>
            <person name="Piazza S."/>
            <person name="Reed J."/>
            <person name="Reid J.F."/>
            <person name="Ring B.Z."/>
            <person name="Ringwald M."/>
            <person name="Rost B."/>
            <person name="Ruan Y."/>
            <person name="Salzberg S.L."/>
            <person name="Sandelin A."/>
            <person name="Schneider C."/>
            <person name="Schoenbach C."/>
            <person name="Sekiguchi K."/>
            <person name="Semple C.A."/>
            <person name="Seno S."/>
            <person name="Sessa L."/>
            <person name="Sheng Y."/>
            <person name="Shibata Y."/>
            <person name="Shimada H."/>
            <person name="Shimada K."/>
            <person name="Silva D."/>
            <person name="Sinclair B."/>
            <person name="Sperling S."/>
            <person name="Stupka E."/>
            <person name="Sugiura K."/>
            <person name="Sultana R."/>
            <person name="Takenaka Y."/>
            <person name="Taki K."/>
            <person name="Tammoja K."/>
            <person name="Tan S.L."/>
            <person name="Tang S."/>
            <person name="Taylor M.S."/>
            <person name="Tegner J."/>
            <person name="Teichmann S.A."/>
            <person name="Ueda H.R."/>
            <person name="van Nimwegen E."/>
            <person name="Verardo R."/>
            <person name="Wei C.L."/>
            <person name="Yagi K."/>
            <person name="Yamanishi H."/>
            <person name="Zabarovsky E."/>
            <person name="Zhu S."/>
            <person name="Zimmer A."/>
            <person name="Hide W."/>
            <person name="Bult C."/>
            <person name="Grimmond S.M."/>
            <person name="Teasdale R.D."/>
            <person name="Liu E.T."/>
            <person name="Brusic V."/>
            <person name="Quackenbush J."/>
            <person name="Wahlestedt C."/>
            <person name="Mattick J.S."/>
            <person name="Hume D.A."/>
            <person name="Kai C."/>
            <person name="Sasaki D."/>
            <person name="Tomaru Y."/>
            <person name="Fukuda S."/>
            <person name="Kanamori-Katayama M."/>
            <person name="Suzuki M."/>
            <person name="Aoki J."/>
            <person name="Arakawa T."/>
            <person name="Iida J."/>
            <person name="Imamura K."/>
            <person name="Itoh M."/>
            <person name="Kato T."/>
            <person name="Kawaji H."/>
            <person name="Kawagashira N."/>
            <person name="Kawashima T."/>
            <person name="Kojima M."/>
            <person name="Kondo S."/>
            <person name="Konno H."/>
            <person name="Nakano K."/>
            <person name="Ninomiya N."/>
            <person name="Nishio T."/>
            <person name="Okada M."/>
            <person name="Plessy C."/>
            <person name="Shibata K."/>
            <person name="Shiraki T."/>
            <person name="Suzuki S."/>
            <person name="Tagami M."/>
            <person name="Waki K."/>
            <person name="Watahiki A."/>
            <person name="Okamura-Oho Y."/>
            <person name="Suzuki H."/>
            <person name="Kawai J."/>
            <person name="Hayashizaki Y."/>
        </authorList>
    </citation>
    <scope>NUCLEOTIDE SEQUENCE [LARGE SCALE MRNA]</scope>
    <source>
        <strain>C57BL/6J</strain>
        <tissue>Cerebellum</tissue>
        <tissue>Skin</tissue>
    </source>
</reference>
<reference key="5">
    <citation type="journal article" date="2009" name="PLoS Biol.">
        <title>Lineage-specific biology revealed by a finished genome assembly of the mouse.</title>
        <authorList>
            <person name="Church D.M."/>
            <person name="Goodstadt L."/>
            <person name="Hillier L.W."/>
            <person name="Zody M.C."/>
            <person name="Goldstein S."/>
            <person name="She X."/>
            <person name="Bult C.J."/>
            <person name="Agarwala R."/>
            <person name="Cherry J.L."/>
            <person name="DiCuccio M."/>
            <person name="Hlavina W."/>
            <person name="Kapustin Y."/>
            <person name="Meric P."/>
            <person name="Maglott D."/>
            <person name="Birtle Z."/>
            <person name="Marques A.C."/>
            <person name="Graves T."/>
            <person name="Zhou S."/>
            <person name="Teague B."/>
            <person name="Potamousis K."/>
            <person name="Churas C."/>
            <person name="Place M."/>
            <person name="Herschleb J."/>
            <person name="Runnheim R."/>
            <person name="Forrest D."/>
            <person name="Amos-Landgraf J."/>
            <person name="Schwartz D.C."/>
            <person name="Cheng Z."/>
            <person name="Lindblad-Toh K."/>
            <person name="Eichler E.E."/>
            <person name="Ponting C.P."/>
        </authorList>
    </citation>
    <scope>NUCLEOTIDE SEQUENCE [LARGE SCALE GENOMIC DNA]</scope>
    <source>
        <strain>C57BL/6J</strain>
    </source>
</reference>
<reference key="6">
    <citation type="submission" date="2005-07" db="EMBL/GenBank/DDBJ databases">
        <authorList>
            <person name="Mural R.J."/>
            <person name="Adams M.D."/>
            <person name="Myers E.W."/>
            <person name="Smith H.O."/>
            <person name="Venter J.C."/>
        </authorList>
    </citation>
    <scope>NUCLEOTIDE SEQUENCE [LARGE SCALE GENOMIC DNA]</scope>
</reference>
<reference key="7">
    <citation type="journal article" date="2004" name="Genome Res.">
        <title>The status, quality, and expansion of the NIH full-length cDNA project: the Mammalian Gene Collection (MGC).</title>
        <authorList>
            <consortium name="The MGC Project Team"/>
        </authorList>
    </citation>
    <scope>NUCLEOTIDE SEQUENCE [LARGE SCALE MRNA]</scope>
    <source>
        <tissue>Brain</tissue>
    </source>
</reference>
<reference key="8">
    <citation type="journal article" date="2000" name="Eur. J. Neurosci.">
        <title>A novel brain receptor is expressed in a distinct population of olfactory sensory neurons.</title>
        <authorList>
            <person name="Conzelmann S."/>
            <person name="Levai O."/>
            <person name="Bode B."/>
            <person name="Eisel U."/>
            <person name="Raming K."/>
            <person name="Breer H."/>
            <person name="Strotmann J."/>
        </authorList>
    </citation>
    <scope>TISSUE SPECIFICITY</scope>
    <scope>DEVELOPMENTAL STAGE</scope>
</reference>
<reference key="9">
    <citation type="journal article" date="2013" name="Proc. Natl. Acad. Sci. U.S.A.">
        <title>Olfactory receptor responding to gut microbiota-derived signals plays a role in renin secretion and blood pressure regulation.</title>
        <authorList>
            <person name="Pluznick J.L."/>
            <person name="Protzko R.J."/>
            <person name="Gevorgyan H."/>
            <person name="Peterlin Z."/>
            <person name="Sipos A."/>
            <person name="Han J."/>
            <person name="Brunet I."/>
            <person name="Wan L.X."/>
            <person name="Rey F."/>
            <person name="Wang T."/>
            <person name="Firestein S.J."/>
            <person name="Yanagisawa M."/>
            <person name="Gordon J.I."/>
            <person name="Eichmann A."/>
            <person name="Peti-Peterdi J."/>
            <person name="Caplan M.J."/>
        </authorList>
    </citation>
    <scope>FUNCTION</scope>
    <scope>DISRUPTION PHENOTYPE</scope>
    <scope>SUBCELLULAR LOCATION</scope>
    <scope>TISSUE SPECIFICITY</scope>
    <scope>CAUTION</scope>
</reference>
<reference key="10">
    <citation type="journal article" date="2015" name="Nature">
        <title>Oxygen regulation of breathing through an olfactory receptor activated by lactate.</title>
        <authorList>
            <person name="Chang A.J."/>
            <person name="Ortega F.E."/>
            <person name="Riegler J."/>
            <person name="Madison D.V."/>
            <person name="Krasnow M.A."/>
        </authorList>
    </citation>
    <scope>TISSUE SPECIFICITY</scope>
    <scope>DISRUPTION PHENOTYPE</scope>
    <scope>CAUTION</scope>
    <scope>FUNCTION</scope>
</reference>
<reference key="11">
    <citation type="journal article" date="2018" name="Nature">
        <title>The role of Olfr78 in the breathing circuit of mice.</title>
        <authorList>
            <person name="Torres-Torrelo H."/>
            <person name="Ortega-Saenz P."/>
            <person name="Macias D."/>
            <person name="Omura M."/>
            <person name="Zhou T."/>
            <person name="Matsunami H."/>
            <person name="Johnson R.S."/>
            <person name="Mombaerts P."/>
            <person name="Lopez-Barneo J."/>
        </authorList>
    </citation>
    <scope>CAUTION</scope>
    <scope>DISRUPTION PHENOTYPE</scope>
    <scope>FUNCTION</scope>
</reference>
<reference key="12">
    <citation type="journal article" date="2018" name="Nature">
        <title>Chang et al. reply.</title>
        <authorList>
            <person name="Chang A.J."/>
            <person name="Kim N.S."/>
            <person name="Hireed H."/>
            <person name="de Arce A.D."/>
            <person name="Ortega F.E."/>
            <person name="Riegler J."/>
            <person name="Madison D.V."/>
            <person name="Krasnow M.A."/>
        </authorList>
    </citation>
    <scope>REPLY TO PUBMED:30258151</scope>
</reference>
<proteinExistence type="evidence at transcript level"/>
<comment type="function">
    <text evidence="1 6 7 8">Olfactory receptor. The activity of this receptor is probably mediated by G-proteins which induce elevation of intracellular Ca(2+), cAMP and activation of phosphorylation of the protein kinases PKA and MAPK3/MAPK1. Activation of OR51E2 may affect melanocyte proliferation, differentiation, and melanogenesis and may increase proliferation and migration of primary retinal pigment epithelial (RPE) cells (By similarity). Activated by the short chain fatty acids (SCFA), acetate and propionate (PubMed:23401498). In response to SCFA, may positively regulate renin secretion and increase blood pressure (PubMed:23401498). May also be activated by steroid hormones and regulate cell proliferation (By similarity). Activated by L-lactate in glomus cells (PubMed:26560302, PubMed:30258151).</text>
</comment>
<comment type="subcellular location">
    <subcellularLocation>
        <location evidence="6">Cell membrane</location>
        <topology evidence="2">Multi-pass membrane protein</topology>
    </subcellularLocation>
    <subcellularLocation>
        <location evidence="1">Early endosome membrane</location>
        <topology evidence="2">Multi-pass membrane protein</topology>
    </subcellularLocation>
</comment>
<comment type="tissue specificity">
    <text evidence="4 5 6 7">In brain, expressed in medulla oblongata by cells close to the fourth ventricle, in the area postrema, the nucleus tractus solitarius (PubMed:11707321). Expressed in olfactory epithelium and vomeronasal organ (PubMed:11069588). Expressed in kidney by large renal vessels, renal afferent arterioles, and extrarenal vascular beds. In small resistance vessels the expression is restricted to cells of the juxtaglomerular afferent arteriole, which mediate renin secretion. Also detected in small blood vessels in a variety of tissues including heart, diaphragm, skeletal muscle, and skin. In the heart, esophagus, and stomach it is detected in axons of autonomic neurons and neurons of the enteric plexus (PubMed:23401498). Also detected in colon and liver (PubMed:23401498). Expressed in the glomus cells of the carotid body (PubMed:26560302).</text>
</comment>
<comment type="developmental stage">
    <text evidence="4">Primarily detected between 11 dpc and 12 dpc. Expressed at 12 dpc in the dorsal region of the developing nasal cavity and in the mesenchyme located between the olfactory epithelium and the presumptive olfactory bulb. In the medulla oblongata, first detected at 17 dpc. In the area postrema and the nucleus tractus solitarius expression peaks at P20 and then decreases slightly.</text>
</comment>
<comment type="disruption phenotype">
    <text evidence="6">Knockout mice display reduced baseline blood pressure.</text>
</comment>
<comment type="similarity">
    <text evidence="3">Belongs to the G-protein coupled receptor 1 family.</text>
</comment>
<comment type="caution">
    <text evidence="1 6">Contradictory results have been reported for activation by beta-ionone in human and mouse. Beta-ionone does not activate OR51E2 in mouse. This difference may depend on the different methods used for these experiments, or may be due to species difference.</text>
</comment>
<comment type="caution">
    <text evidence="7 8 9">Conflicting results for the role of OR51E2 in the regulation of breathing and its role as a hypoxia sensor activated by lactate are reported (PubMed:26560302, PubMed:30258151). It was first described as a hypoxia sensor in the breathing circuit by sensing lactate produced when oxygen levels decline (PubMed:26560302). A recent study fails to confirm a role for OR52E2 in this pathway (PubMed:30258151). Conflicting results may reflect the use of different strain backgrounds (PubMed:26560302, PubMed:30258151, PubMed:30258152).</text>
</comment>
<name>O51E2_MOUSE</name>
<keyword id="KW-1003">Cell membrane</keyword>
<keyword id="KW-1015">Disulfide bond</keyword>
<keyword id="KW-0967">Endosome</keyword>
<keyword id="KW-0297">G-protein coupled receptor</keyword>
<keyword id="KW-0325">Glycoprotein</keyword>
<keyword id="KW-0472">Membrane</keyword>
<keyword id="KW-0552">Olfaction</keyword>
<keyword id="KW-0675">Receptor</keyword>
<keyword id="KW-1185">Reference proteome</keyword>
<keyword id="KW-0716">Sensory transduction</keyword>
<keyword id="KW-0807">Transducer</keyword>
<keyword id="KW-0812">Transmembrane</keyword>
<keyword id="KW-1133">Transmembrane helix</keyword>
<sequence length="320" mass="35578">MSSCNFTHATFLLIGIPGLEEAHFWFGFPLLSMYAVALFGNCIVVFIVRTERSLHAPMYLFLCMLAAIDLALSTSTMPKILALFWFDSREITFDACLAQMFFIHTLSAIESTILLAMAFDRYVAICHPLRHAAVLNNTVTVQIGMVALVRGSLFFFPLPLLIKRLAFCHSNVLSHSYCVHQDVMKLAYTDTLPNVVYGLTAILLVMGVDVMFISLSYFLIIRTVLQLPSKSERAKAFGTCVSHISVVLAFYVPLIGLSVVHRFGNSLDPIVHVLMGDVYLLLPPVINPIIYGAKTKQIRTRVLAMFKISCDKDIEAGGNT</sequence>